<organism>
    <name type="scientific">Saccharomyces cerevisiae (strain ATCC 204508 / S288c)</name>
    <name type="common">Baker's yeast</name>
    <dbReference type="NCBI Taxonomy" id="559292"/>
    <lineage>
        <taxon>Eukaryota</taxon>
        <taxon>Fungi</taxon>
        <taxon>Dikarya</taxon>
        <taxon>Ascomycota</taxon>
        <taxon>Saccharomycotina</taxon>
        <taxon>Saccharomycetes</taxon>
        <taxon>Saccharomycetales</taxon>
        <taxon>Saccharomycetaceae</taxon>
        <taxon>Saccharomyces</taxon>
    </lineage>
</organism>
<keyword id="KW-1003">Cell membrane</keyword>
<keyword id="KW-0254">Endocytosis</keyword>
<keyword id="KW-1017">Isopeptide bond</keyword>
<keyword id="KW-0472">Membrane</keyword>
<keyword id="KW-0597">Phosphoprotein</keyword>
<keyword id="KW-1185">Reference proteome</keyword>
<keyword id="KW-0832">Ubl conjugation</keyword>
<proteinExistence type="evidence at protein level"/>
<comment type="function">
    <text evidence="4">Involved in the early step of endocytosis.</text>
</comment>
<comment type="subunit">
    <text evidence="4">Interacts with EDE1.</text>
</comment>
<comment type="subcellular location">
    <subcellularLocation>
        <location evidence="2 4">Cell membrane</location>
        <topology evidence="2 4">Peripheral membrane protein</topology>
    </subcellularLocation>
    <text>Localizes to the cell periphery and the bud neck. Found at endocytic sites at the cell periphery during the early stages of endocytosis.</text>
</comment>
<comment type="miscellaneous">
    <text evidence="3">Present with 1480 molecules/cell in log phase SD medium.</text>
</comment>
<comment type="similarity">
    <text evidence="5">Belongs to the pal1 family.</text>
</comment>
<evidence type="ECO:0000256" key="1">
    <source>
        <dbReference type="SAM" id="MobiDB-lite"/>
    </source>
</evidence>
<evidence type="ECO:0000269" key="2">
    <source>
    </source>
</evidence>
<evidence type="ECO:0000269" key="3">
    <source>
    </source>
</evidence>
<evidence type="ECO:0000269" key="4">
    <source>
    </source>
</evidence>
<evidence type="ECO:0000305" key="5"/>
<evidence type="ECO:0007744" key="6">
    <source>
    </source>
</evidence>
<evidence type="ECO:0007744" key="7">
    <source>
    </source>
</evidence>
<evidence type="ECO:0007744" key="8">
    <source>
    </source>
</evidence>
<evidence type="ECO:0007744" key="9">
    <source>
    </source>
</evidence>
<gene>
    <name type="primary">PAL1</name>
    <name type="ordered locus">YDR348C</name>
</gene>
<reference key="1">
    <citation type="journal article" date="1997" name="Nature">
        <title>The nucleotide sequence of Saccharomyces cerevisiae chromosome IV.</title>
        <authorList>
            <person name="Jacq C."/>
            <person name="Alt-Moerbe J."/>
            <person name="Andre B."/>
            <person name="Arnold W."/>
            <person name="Bahr A."/>
            <person name="Ballesta J.P.G."/>
            <person name="Bargues M."/>
            <person name="Baron L."/>
            <person name="Becker A."/>
            <person name="Biteau N."/>
            <person name="Bloecker H."/>
            <person name="Blugeon C."/>
            <person name="Boskovic J."/>
            <person name="Brandt P."/>
            <person name="Brueckner M."/>
            <person name="Buitrago M.J."/>
            <person name="Coster F."/>
            <person name="Delaveau T."/>
            <person name="del Rey F."/>
            <person name="Dujon B."/>
            <person name="Eide L.G."/>
            <person name="Garcia-Cantalejo J.M."/>
            <person name="Goffeau A."/>
            <person name="Gomez-Peris A."/>
            <person name="Granotier C."/>
            <person name="Hanemann V."/>
            <person name="Hankeln T."/>
            <person name="Hoheisel J.D."/>
            <person name="Jaeger W."/>
            <person name="Jimenez A."/>
            <person name="Jonniaux J.-L."/>
            <person name="Kraemer C."/>
            <person name="Kuester H."/>
            <person name="Laamanen P."/>
            <person name="Legros Y."/>
            <person name="Louis E.J."/>
            <person name="Moeller-Rieker S."/>
            <person name="Monnet A."/>
            <person name="Moro M."/>
            <person name="Mueller-Auer S."/>
            <person name="Nussbaumer B."/>
            <person name="Paricio N."/>
            <person name="Paulin L."/>
            <person name="Perea J."/>
            <person name="Perez-Alonso M."/>
            <person name="Perez-Ortin J.E."/>
            <person name="Pohl T.M."/>
            <person name="Prydz H."/>
            <person name="Purnelle B."/>
            <person name="Rasmussen S.W."/>
            <person name="Remacha M.A."/>
            <person name="Revuelta J.L."/>
            <person name="Rieger M."/>
            <person name="Salom D."/>
            <person name="Saluz H.P."/>
            <person name="Saiz J.E."/>
            <person name="Saren A.-M."/>
            <person name="Schaefer M."/>
            <person name="Scharfe M."/>
            <person name="Schmidt E.R."/>
            <person name="Schneider C."/>
            <person name="Scholler P."/>
            <person name="Schwarz S."/>
            <person name="Soler-Mira A."/>
            <person name="Urrestarazu L.A."/>
            <person name="Verhasselt P."/>
            <person name="Vissers S."/>
            <person name="Voet M."/>
            <person name="Volckaert G."/>
            <person name="Wagner G."/>
            <person name="Wambutt R."/>
            <person name="Wedler E."/>
            <person name="Wedler H."/>
            <person name="Woelfl S."/>
            <person name="Harris D.E."/>
            <person name="Bowman S."/>
            <person name="Brown D."/>
            <person name="Churcher C.M."/>
            <person name="Connor R."/>
            <person name="Dedman K."/>
            <person name="Gentles S."/>
            <person name="Hamlin N."/>
            <person name="Hunt S."/>
            <person name="Jones L."/>
            <person name="McDonald S."/>
            <person name="Murphy L.D."/>
            <person name="Niblett D."/>
            <person name="Odell C."/>
            <person name="Oliver K."/>
            <person name="Rajandream M.A."/>
            <person name="Richards C."/>
            <person name="Shore L."/>
            <person name="Walsh S.V."/>
            <person name="Barrell B.G."/>
            <person name="Dietrich F.S."/>
            <person name="Mulligan J.T."/>
            <person name="Allen E."/>
            <person name="Araujo R."/>
            <person name="Aviles E."/>
            <person name="Berno A."/>
            <person name="Carpenter J."/>
            <person name="Chen E."/>
            <person name="Cherry J.M."/>
            <person name="Chung E."/>
            <person name="Duncan M."/>
            <person name="Hunicke-Smith S."/>
            <person name="Hyman R.W."/>
            <person name="Komp C."/>
            <person name="Lashkari D."/>
            <person name="Lew H."/>
            <person name="Lin D."/>
            <person name="Mosedale D."/>
            <person name="Nakahara K."/>
            <person name="Namath A."/>
            <person name="Oefner P."/>
            <person name="Oh C."/>
            <person name="Petel F.X."/>
            <person name="Roberts D."/>
            <person name="Schramm S."/>
            <person name="Schroeder M."/>
            <person name="Shogren T."/>
            <person name="Shroff N."/>
            <person name="Winant A."/>
            <person name="Yelton M.A."/>
            <person name="Botstein D."/>
            <person name="Davis R.W."/>
            <person name="Johnston M."/>
            <person name="Andrews S."/>
            <person name="Brinkman R."/>
            <person name="Cooper J."/>
            <person name="Ding H."/>
            <person name="Du Z."/>
            <person name="Favello A."/>
            <person name="Fulton L."/>
            <person name="Gattung S."/>
            <person name="Greco T."/>
            <person name="Hallsworth K."/>
            <person name="Hawkins J."/>
            <person name="Hillier L.W."/>
            <person name="Jier M."/>
            <person name="Johnson D."/>
            <person name="Johnston L."/>
            <person name="Kirsten J."/>
            <person name="Kucaba T."/>
            <person name="Langston Y."/>
            <person name="Latreille P."/>
            <person name="Le T."/>
            <person name="Mardis E."/>
            <person name="Menezes S."/>
            <person name="Miller N."/>
            <person name="Nhan M."/>
            <person name="Pauley A."/>
            <person name="Peluso D."/>
            <person name="Rifkin L."/>
            <person name="Riles L."/>
            <person name="Taich A."/>
            <person name="Trevaskis E."/>
            <person name="Vignati D."/>
            <person name="Wilcox L."/>
            <person name="Wohldman P."/>
            <person name="Vaudin M."/>
            <person name="Wilson R."/>
            <person name="Waterston R."/>
            <person name="Albermann K."/>
            <person name="Hani J."/>
            <person name="Heumann K."/>
            <person name="Kleine K."/>
            <person name="Mewes H.-W."/>
            <person name="Zollner A."/>
            <person name="Zaccaria P."/>
        </authorList>
    </citation>
    <scope>NUCLEOTIDE SEQUENCE [LARGE SCALE GENOMIC DNA]</scope>
    <source>
        <strain>ATCC 204508 / S288c</strain>
    </source>
</reference>
<reference key="2">
    <citation type="journal article" date="2014" name="G3 (Bethesda)">
        <title>The reference genome sequence of Saccharomyces cerevisiae: Then and now.</title>
        <authorList>
            <person name="Engel S.R."/>
            <person name="Dietrich F.S."/>
            <person name="Fisk D.G."/>
            <person name="Binkley G."/>
            <person name="Balakrishnan R."/>
            <person name="Costanzo M.C."/>
            <person name="Dwight S.S."/>
            <person name="Hitz B.C."/>
            <person name="Karra K."/>
            <person name="Nash R.S."/>
            <person name="Weng S."/>
            <person name="Wong E.D."/>
            <person name="Lloyd P."/>
            <person name="Skrzypek M.S."/>
            <person name="Miyasato S.R."/>
            <person name="Simison M."/>
            <person name="Cherry J.M."/>
        </authorList>
    </citation>
    <scope>GENOME REANNOTATION</scope>
    <source>
        <strain>ATCC 204508 / S288c</strain>
    </source>
</reference>
<reference key="3">
    <citation type="journal article" date="2007" name="Genome Res.">
        <title>Approaching a complete repository of sequence-verified protein-encoding clones for Saccharomyces cerevisiae.</title>
        <authorList>
            <person name="Hu Y."/>
            <person name="Rolfs A."/>
            <person name="Bhullar B."/>
            <person name="Murthy T.V.S."/>
            <person name="Zhu C."/>
            <person name="Berger M.F."/>
            <person name="Camargo A.A."/>
            <person name="Kelley F."/>
            <person name="McCarron S."/>
            <person name="Jepson D."/>
            <person name="Richardson A."/>
            <person name="Raphael J."/>
            <person name="Moreira D."/>
            <person name="Taycher E."/>
            <person name="Zuo D."/>
            <person name="Mohr S."/>
            <person name="Kane M.F."/>
            <person name="Williamson J."/>
            <person name="Simpson A.J.G."/>
            <person name="Bulyk M.L."/>
            <person name="Harlow E."/>
            <person name="Marsischky G."/>
            <person name="Kolodner R.D."/>
            <person name="LaBaer J."/>
        </authorList>
    </citation>
    <scope>NUCLEOTIDE SEQUENCE [GENOMIC DNA]</scope>
    <source>
        <strain>ATCC 204508 / S288c</strain>
    </source>
</reference>
<reference key="4">
    <citation type="journal article" date="2003" name="Nature">
        <title>Global analysis of protein localization in budding yeast.</title>
        <authorList>
            <person name="Huh W.-K."/>
            <person name="Falvo J.V."/>
            <person name="Gerke L.C."/>
            <person name="Carroll A.S."/>
            <person name="Howson R.W."/>
            <person name="Weissman J.S."/>
            <person name="O'Shea E.K."/>
        </authorList>
    </citation>
    <scope>SUBCELLULAR LOCATION [LARGE SCALE ANALYSIS]</scope>
</reference>
<reference key="5">
    <citation type="journal article" date="2003" name="Nature">
        <title>Global analysis of protein expression in yeast.</title>
        <authorList>
            <person name="Ghaemmaghami S."/>
            <person name="Huh W.-K."/>
            <person name="Bower K."/>
            <person name="Howson R.W."/>
            <person name="Belle A."/>
            <person name="Dephoure N."/>
            <person name="O'Shea E.K."/>
            <person name="Weissman J.S."/>
        </authorList>
    </citation>
    <scope>LEVEL OF PROTEIN EXPRESSION [LARGE SCALE ANALYSIS]</scope>
</reference>
<reference key="6">
    <citation type="journal article" date="2007" name="J. Proteome Res.">
        <title>Large-scale phosphorylation analysis of alpha-factor-arrested Saccharomyces cerevisiae.</title>
        <authorList>
            <person name="Li X."/>
            <person name="Gerber S.A."/>
            <person name="Rudner A.D."/>
            <person name="Beausoleil S.A."/>
            <person name="Haas W."/>
            <person name="Villen J."/>
            <person name="Elias J.E."/>
            <person name="Gygi S.P."/>
        </authorList>
    </citation>
    <scope>PHOSPHORYLATION [LARGE SCALE ANALYSIS] AT SER-64</scope>
    <scope>IDENTIFICATION BY MASS SPECTROMETRY [LARGE SCALE ANALYSIS]</scope>
    <source>
        <strain>ADR376</strain>
    </source>
</reference>
<reference key="7">
    <citation type="journal article" date="2008" name="Mol. Cell. Proteomics">
        <title>A multidimensional chromatography technology for in-depth phosphoproteome analysis.</title>
        <authorList>
            <person name="Albuquerque C.P."/>
            <person name="Smolka M.B."/>
            <person name="Payne S.H."/>
            <person name="Bafna V."/>
            <person name="Eng J."/>
            <person name="Zhou H."/>
        </authorList>
    </citation>
    <scope>PHOSPHORYLATION [LARGE SCALE ANALYSIS] AT SER-64</scope>
    <scope>IDENTIFICATION BY MASS SPECTROMETRY [LARGE SCALE ANALYSIS]</scope>
</reference>
<reference key="8">
    <citation type="journal article" date="2009" name="Science">
        <title>Global analysis of Cdk1 substrate phosphorylation sites provides insights into evolution.</title>
        <authorList>
            <person name="Holt L.J."/>
            <person name="Tuch B.B."/>
            <person name="Villen J."/>
            <person name="Johnson A.D."/>
            <person name="Gygi S.P."/>
            <person name="Morgan D.O."/>
        </authorList>
    </citation>
    <scope>PHOSPHORYLATION [LARGE SCALE ANALYSIS] AT SER-14; SER-45; THR-47; SER-49; SER-64; SER-114; SER-121; THR-153; THR-304 AND SER-307</scope>
    <scope>IDENTIFICATION BY MASS SPECTROMETRY [LARGE SCALE ANALYSIS]</scope>
</reference>
<reference key="9">
    <citation type="journal article" date="2012" name="Mol. Biol. Cell">
        <title>Analysis of yeast endocytic site formation and maturation through a regulatory transition point.</title>
        <authorList>
            <person name="Carroll S.Y."/>
            <person name="Stimpson H.E."/>
            <person name="Weinberg J."/>
            <person name="Toret C.P."/>
            <person name="Sun Y."/>
            <person name="Drubin D.G."/>
        </authorList>
    </citation>
    <scope>FUNCTION</scope>
    <scope>SUBCELLULAR LOCATION</scope>
    <scope>INTERACTION WITH EDE1</scope>
</reference>
<reference key="10">
    <citation type="journal article" date="2012" name="Proteomics">
        <title>Sites of ubiquitin attachment in Saccharomyces cerevisiae.</title>
        <authorList>
            <person name="Starita L.M."/>
            <person name="Lo R.S."/>
            <person name="Eng J.K."/>
            <person name="von Haller P.D."/>
            <person name="Fields S."/>
        </authorList>
    </citation>
    <scope>UBIQUITINATION [LARGE SCALE ANALYSIS] AT LYS-135; LYS-138; LYS-292; LYS-328 AND LYS-445</scope>
    <scope>IDENTIFICATION BY MASS SPECTROMETRY [LARGE SCALE ANALYSIS]</scope>
</reference>
<protein>
    <recommendedName>
        <fullName>Protein PAL1</fullName>
    </recommendedName>
    <alternativeName>
        <fullName>Pears and lemons protein 1</fullName>
    </alternativeName>
</protein>
<dbReference type="EMBL" id="U51032">
    <property type="protein sequence ID" value="AAB64784.1"/>
    <property type="molecule type" value="Genomic_DNA"/>
</dbReference>
<dbReference type="EMBL" id="AY723791">
    <property type="protein sequence ID" value="AAU09708.1"/>
    <property type="molecule type" value="Genomic_DNA"/>
</dbReference>
<dbReference type="EMBL" id="BK006938">
    <property type="protein sequence ID" value="DAA12188.1"/>
    <property type="molecule type" value="Genomic_DNA"/>
</dbReference>
<dbReference type="PIR" id="S70113">
    <property type="entry name" value="S70113"/>
</dbReference>
<dbReference type="RefSeq" id="NP_010635.1">
    <property type="nucleotide sequence ID" value="NM_001180656.1"/>
</dbReference>
<dbReference type="BioGRID" id="32404">
    <property type="interactions" value="160"/>
</dbReference>
<dbReference type="DIP" id="DIP-1842N"/>
<dbReference type="FunCoup" id="Q05518">
    <property type="interactions" value="209"/>
</dbReference>
<dbReference type="IntAct" id="Q05518">
    <property type="interactions" value="39"/>
</dbReference>
<dbReference type="MINT" id="Q05518"/>
<dbReference type="STRING" id="4932.YDR348C"/>
<dbReference type="GlyGen" id="Q05518">
    <property type="glycosylation" value="1 site"/>
</dbReference>
<dbReference type="iPTMnet" id="Q05518"/>
<dbReference type="PaxDb" id="4932-YDR348C"/>
<dbReference type="PeptideAtlas" id="Q05518"/>
<dbReference type="TopDownProteomics" id="Q05518"/>
<dbReference type="EnsemblFungi" id="YDR348C_mRNA">
    <property type="protein sequence ID" value="YDR348C"/>
    <property type="gene ID" value="YDR348C"/>
</dbReference>
<dbReference type="GeneID" id="851949"/>
<dbReference type="KEGG" id="sce:YDR348C"/>
<dbReference type="AGR" id="SGD:S000002756"/>
<dbReference type="SGD" id="S000002756">
    <property type="gene designation" value="PAL1"/>
</dbReference>
<dbReference type="VEuPathDB" id="FungiDB:YDR348C"/>
<dbReference type="eggNOG" id="ENOG502QPHY">
    <property type="taxonomic scope" value="Eukaryota"/>
</dbReference>
<dbReference type="GeneTree" id="ENSGT00940000176601"/>
<dbReference type="HOGENOM" id="CLU_041195_1_0_1"/>
<dbReference type="InParanoid" id="Q05518"/>
<dbReference type="OMA" id="FPIDGPN"/>
<dbReference type="OrthoDB" id="5352132at2759"/>
<dbReference type="BioCyc" id="YEAST:G3O-29902-MONOMER"/>
<dbReference type="BioGRID-ORCS" id="851949">
    <property type="hits" value="3 hits in 10 CRISPR screens"/>
</dbReference>
<dbReference type="PRO" id="PR:Q05518"/>
<dbReference type="Proteomes" id="UP000002311">
    <property type="component" value="Chromosome IV"/>
</dbReference>
<dbReference type="RNAct" id="Q05518">
    <property type="molecule type" value="protein"/>
</dbReference>
<dbReference type="GO" id="GO:0030479">
    <property type="term" value="C:actin cortical patch"/>
    <property type="evidence" value="ECO:0000314"/>
    <property type="project" value="SGD"/>
</dbReference>
<dbReference type="GO" id="GO:0005938">
    <property type="term" value="C:cell cortex"/>
    <property type="evidence" value="ECO:0000314"/>
    <property type="project" value="SGD"/>
</dbReference>
<dbReference type="GO" id="GO:0005935">
    <property type="term" value="C:cellular bud neck"/>
    <property type="evidence" value="ECO:0007005"/>
    <property type="project" value="SGD"/>
</dbReference>
<dbReference type="GO" id="GO:0005934">
    <property type="term" value="C:cellular bud tip"/>
    <property type="evidence" value="ECO:0007005"/>
    <property type="project" value="SGD"/>
</dbReference>
<dbReference type="GO" id="GO:0005737">
    <property type="term" value="C:cytoplasm"/>
    <property type="evidence" value="ECO:0007005"/>
    <property type="project" value="SGD"/>
</dbReference>
<dbReference type="GO" id="GO:0043332">
    <property type="term" value="C:mating projection tip"/>
    <property type="evidence" value="ECO:0007005"/>
    <property type="project" value="SGD"/>
</dbReference>
<dbReference type="GO" id="GO:0005886">
    <property type="term" value="C:plasma membrane"/>
    <property type="evidence" value="ECO:0007669"/>
    <property type="project" value="UniProtKB-SubCell"/>
</dbReference>
<dbReference type="GO" id="GO:0006897">
    <property type="term" value="P:endocytosis"/>
    <property type="evidence" value="ECO:0007669"/>
    <property type="project" value="UniProtKB-KW"/>
</dbReference>
<dbReference type="InterPro" id="IPR013226">
    <property type="entry name" value="Pal1"/>
</dbReference>
<dbReference type="PANTHER" id="PTHR28307">
    <property type="entry name" value="PROTEIN PAL1"/>
    <property type="match status" value="1"/>
</dbReference>
<dbReference type="PANTHER" id="PTHR28307:SF2">
    <property type="entry name" value="PROTEIN PAL1"/>
    <property type="match status" value="1"/>
</dbReference>
<dbReference type="Pfam" id="PF08316">
    <property type="entry name" value="Pal1"/>
    <property type="match status" value="1"/>
</dbReference>
<name>PAL1_YEAST</name>
<sequence>MENRNSSTSSRPFSVNNPFRNATVDSSINQYKNDSQFQEWAKNQSRTNSFDMPQLNTRTSSQLSFPNIPEDEPQRNADQQGAFYSGLESFSSGSLSPPSRPLSSKNPFLDDVSSATDFRRSPPPVSRNKNHPTAKEEKEQLRQRYLEESDVSTVGNTRENTDLPPSYEEITSTNGSRRAYPKEKVSRPSSHREHSNSGTYISRRSSSHHHREASSSSTPSKKGKRKSKVIVPKNVDTIDKLDVTGLFGGSFHHDGPFDAVTPHRNKNNKAAPVLAFPVDGPNSTIGGASTKKSALDEVFGRDDTDDSDIYQYSSQTLRRGGDTQDAIKANVGNVQQMDAKNKTELVHGPVTAGLGSSTFLDGAPASSAAIRNDIKAHSYHNRNGGLQRNKSLSQRLGLGGSGDSNAPMTGVRRNLSLSRDNYDVGHSNEGVRRSKTVNSPNRTHKSNYTTDFDGQDDHNEDEEDVYLGVRYNEPNMKKKSTGSKLLSRVKSLKVGRKSQ</sequence>
<accession>Q05518</accession>
<accession>D6VSX8</accession>
<accession>Q66RD5</accession>
<feature type="chain" id="PRO_0000253820" description="Protein PAL1">
    <location>
        <begin position="1"/>
        <end position="499"/>
    </location>
</feature>
<feature type="region of interest" description="Disordered" evidence="1">
    <location>
        <begin position="1"/>
        <end position="232"/>
    </location>
</feature>
<feature type="region of interest" description="Disordered" evidence="1">
    <location>
        <begin position="379"/>
        <end position="499"/>
    </location>
</feature>
<feature type="compositionally biased region" description="Polar residues" evidence="1">
    <location>
        <begin position="1"/>
        <end position="65"/>
    </location>
</feature>
<feature type="compositionally biased region" description="Low complexity" evidence="1">
    <location>
        <begin position="85"/>
        <end position="104"/>
    </location>
</feature>
<feature type="compositionally biased region" description="Basic and acidic residues" evidence="1">
    <location>
        <begin position="133"/>
        <end position="147"/>
    </location>
</feature>
<feature type="compositionally biased region" description="Basic and acidic residues" evidence="1">
    <location>
        <begin position="180"/>
        <end position="195"/>
    </location>
</feature>
<feature type="compositionally biased region" description="Polar residues" evidence="1">
    <location>
        <begin position="436"/>
        <end position="452"/>
    </location>
</feature>
<feature type="compositionally biased region" description="Basic residues" evidence="1">
    <location>
        <begin position="490"/>
        <end position="499"/>
    </location>
</feature>
<feature type="modified residue" description="Phosphoserine" evidence="8">
    <location>
        <position position="14"/>
    </location>
</feature>
<feature type="modified residue" description="Phosphoserine" evidence="8">
    <location>
        <position position="45"/>
    </location>
</feature>
<feature type="modified residue" description="Phosphothreonine" evidence="8">
    <location>
        <position position="47"/>
    </location>
</feature>
<feature type="modified residue" description="Phosphoserine" evidence="8">
    <location>
        <position position="49"/>
    </location>
</feature>
<feature type="modified residue" description="Phosphoserine" evidence="6 7 8">
    <location>
        <position position="64"/>
    </location>
</feature>
<feature type="modified residue" description="Phosphoserine" evidence="8">
    <location>
        <position position="114"/>
    </location>
</feature>
<feature type="modified residue" description="Phosphoserine" evidence="8">
    <location>
        <position position="121"/>
    </location>
</feature>
<feature type="modified residue" description="Phosphothreonine" evidence="8">
    <location>
        <position position="153"/>
    </location>
</feature>
<feature type="modified residue" description="Phosphothreonine" evidence="8">
    <location>
        <position position="304"/>
    </location>
</feature>
<feature type="modified residue" description="Phosphoserine" evidence="8">
    <location>
        <position position="307"/>
    </location>
</feature>
<feature type="cross-link" description="Glycyl lysine isopeptide (Lys-Gly) (interchain with G-Cter in ubiquitin)" evidence="9">
    <location>
        <position position="135"/>
    </location>
</feature>
<feature type="cross-link" description="Glycyl lysine isopeptide (Lys-Gly) (interchain with G-Cter in ubiquitin)" evidence="9">
    <location>
        <position position="138"/>
    </location>
</feature>
<feature type="cross-link" description="Glycyl lysine isopeptide (Lys-Gly) (interchain with G-Cter in ubiquitin)" evidence="9">
    <location>
        <position position="292"/>
    </location>
</feature>
<feature type="cross-link" description="Glycyl lysine isopeptide (Lys-Gly) (interchain with G-Cter in ubiquitin)" evidence="9">
    <location>
        <position position="328"/>
    </location>
</feature>
<feature type="cross-link" description="Glycyl lysine isopeptide (Lys-Gly) (interchain with G-Cter in ubiquitin)" evidence="9">
    <location>
        <position position="445"/>
    </location>
</feature>
<feature type="sequence conflict" description="In Ref. 3; AAU09708." evidence="5" ref="3">
    <original>S</original>
    <variation>G</variation>
    <location>
        <position position="227"/>
    </location>
</feature>